<proteinExistence type="evidence at protein level"/>
<reference key="1">
    <citation type="journal article" date="1999" name="Genomics">
        <title>The human TBX6 gene: cloning and assignment to chromosome 16p11.2.</title>
        <authorList>
            <person name="Papapetrou C."/>
            <person name="Putt W."/>
            <person name="Fox M."/>
            <person name="Edwards Y.H."/>
        </authorList>
    </citation>
    <scope>NUCLEOTIDE SEQUENCE [MRNA] (ISOFORM 1)</scope>
</reference>
<reference key="2">
    <citation type="journal article" date="2004" name="Nat. Genet.">
        <title>Complete sequencing and characterization of 21,243 full-length human cDNAs.</title>
        <authorList>
            <person name="Ota T."/>
            <person name="Suzuki Y."/>
            <person name="Nishikawa T."/>
            <person name="Otsuki T."/>
            <person name="Sugiyama T."/>
            <person name="Irie R."/>
            <person name="Wakamatsu A."/>
            <person name="Hayashi K."/>
            <person name="Sato H."/>
            <person name="Nagai K."/>
            <person name="Kimura K."/>
            <person name="Makita H."/>
            <person name="Sekine M."/>
            <person name="Obayashi M."/>
            <person name="Nishi T."/>
            <person name="Shibahara T."/>
            <person name="Tanaka T."/>
            <person name="Ishii S."/>
            <person name="Yamamoto J."/>
            <person name="Saito K."/>
            <person name="Kawai Y."/>
            <person name="Isono Y."/>
            <person name="Nakamura Y."/>
            <person name="Nagahari K."/>
            <person name="Murakami K."/>
            <person name="Yasuda T."/>
            <person name="Iwayanagi T."/>
            <person name="Wagatsuma M."/>
            <person name="Shiratori A."/>
            <person name="Sudo H."/>
            <person name="Hosoiri T."/>
            <person name="Kaku Y."/>
            <person name="Kodaira H."/>
            <person name="Kondo H."/>
            <person name="Sugawara M."/>
            <person name="Takahashi M."/>
            <person name="Kanda K."/>
            <person name="Yokoi T."/>
            <person name="Furuya T."/>
            <person name="Kikkawa E."/>
            <person name="Omura Y."/>
            <person name="Abe K."/>
            <person name="Kamihara K."/>
            <person name="Katsuta N."/>
            <person name="Sato K."/>
            <person name="Tanikawa M."/>
            <person name="Yamazaki M."/>
            <person name="Ninomiya K."/>
            <person name="Ishibashi T."/>
            <person name="Yamashita H."/>
            <person name="Murakawa K."/>
            <person name="Fujimori K."/>
            <person name="Tanai H."/>
            <person name="Kimata M."/>
            <person name="Watanabe M."/>
            <person name="Hiraoka S."/>
            <person name="Chiba Y."/>
            <person name="Ishida S."/>
            <person name="Ono Y."/>
            <person name="Takiguchi S."/>
            <person name="Watanabe S."/>
            <person name="Yosida M."/>
            <person name="Hotuta T."/>
            <person name="Kusano J."/>
            <person name="Kanehori K."/>
            <person name="Takahashi-Fujii A."/>
            <person name="Hara H."/>
            <person name="Tanase T.-O."/>
            <person name="Nomura Y."/>
            <person name="Togiya S."/>
            <person name="Komai F."/>
            <person name="Hara R."/>
            <person name="Takeuchi K."/>
            <person name="Arita M."/>
            <person name="Imose N."/>
            <person name="Musashino K."/>
            <person name="Yuuki H."/>
            <person name="Oshima A."/>
            <person name="Sasaki N."/>
            <person name="Aotsuka S."/>
            <person name="Yoshikawa Y."/>
            <person name="Matsunawa H."/>
            <person name="Ichihara T."/>
            <person name="Shiohata N."/>
            <person name="Sano S."/>
            <person name="Moriya S."/>
            <person name="Momiyama H."/>
            <person name="Satoh N."/>
            <person name="Takami S."/>
            <person name="Terashima Y."/>
            <person name="Suzuki O."/>
            <person name="Nakagawa S."/>
            <person name="Senoh A."/>
            <person name="Mizoguchi H."/>
            <person name="Goto Y."/>
            <person name="Shimizu F."/>
            <person name="Wakebe H."/>
            <person name="Hishigaki H."/>
            <person name="Watanabe T."/>
            <person name="Sugiyama A."/>
            <person name="Takemoto M."/>
            <person name="Kawakami B."/>
            <person name="Yamazaki M."/>
            <person name="Watanabe K."/>
            <person name="Kumagai A."/>
            <person name="Itakura S."/>
            <person name="Fukuzumi Y."/>
            <person name="Fujimori Y."/>
            <person name="Komiyama M."/>
            <person name="Tashiro H."/>
            <person name="Tanigami A."/>
            <person name="Fujiwara T."/>
            <person name="Ono T."/>
            <person name="Yamada K."/>
            <person name="Fujii Y."/>
            <person name="Ozaki K."/>
            <person name="Hirao M."/>
            <person name="Ohmori Y."/>
            <person name="Kawabata A."/>
            <person name="Hikiji T."/>
            <person name="Kobatake N."/>
            <person name="Inagaki H."/>
            <person name="Ikema Y."/>
            <person name="Okamoto S."/>
            <person name="Okitani R."/>
            <person name="Kawakami T."/>
            <person name="Noguchi S."/>
            <person name="Itoh T."/>
            <person name="Shigeta K."/>
            <person name="Senba T."/>
            <person name="Matsumura K."/>
            <person name="Nakajima Y."/>
            <person name="Mizuno T."/>
            <person name="Morinaga M."/>
            <person name="Sasaki M."/>
            <person name="Togashi T."/>
            <person name="Oyama M."/>
            <person name="Hata H."/>
            <person name="Watanabe M."/>
            <person name="Komatsu T."/>
            <person name="Mizushima-Sugano J."/>
            <person name="Satoh T."/>
            <person name="Shirai Y."/>
            <person name="Takahashi Y."/>
            <person name="Nakagawa K."/>
            <person name="Okumura K."/>
            <person name="Nagase T."/>
            <person name="Nomura N."/>
            <person name="Kikuchi H."/>
            <person name="Masuho Y."/>
            <person name="Yamashita R."/>
            <person name="Nakai K."/>
            <person name="Yada T."/>
            <person name="Nakamura Y."/>
            <person name="Ohara O."/>
            <person name="Isogai T."/>
            <person name="Sugano S."/>
        </authorList>
    </citation>
    <scope>NUCLEOTIDE SEQUENCE [LARGE SCALE MRNA] (ISOFORM 2)</scope>
    <source>
        <tissue>Mammary gland</tissue>
    </source>
</reference>
<reference key="3">
    <citation type="journal article" date="2004" name="Nature">
        <title>The sequence and analysis of duplication-rich human chromosome 16.</title>
        <authorList>
            <person name="Martin J."/>
            <person name="Han C."/>
            <person name="Gordon L.A."/>
            <person name="Terry A."/>
            <person name="Prabhakar S."/>
            <person name="She X."/>
            <person name="Xie G."/>
            <person name="Hellsten U."/>
            <person name="Chan Y.M."/>
            <person name="Altherr M."/>
            <person name="Couronne O."/>
            <person name="Aerts A."/>
            <person name="Bajorek E."/>
            <person name="Black S."/>
            <person name="Blumer H."/>
            <person name="Branscomb E."/>
            <person name="Brown N.C."/>
            <person name="Bruno W.J."/>
            <person name="Buckingham J.M."/>
            <person name="Callen D.F."/>
            <person name="Campbell C.S."/>
            <person name="Campbell M.L."/>
            <person name="Campbell E.W."/>
            <person name="Caoile C."/>
            <person name="Challacombe J.F."/>
            <person name="Chasteen L.A."/>
            <person name="Chertkov O."/>
            <person name="Chi H.C."/>
            <person name="Christensen M."/>
            <person name="Clark L.M."/>
            <person name="Cohn J.D."/>
            <person name="Denys M."/>
            <person name="Detter J.C."/>
            <person name="Dickson M."/>
            <person name="Dimitrijevic-Bussod M."/>
            <person name="Escobar J."/>
            <person name="Fawcett J.J."/>
            <person name="Flowers D."/>
            <person name="Fotopulos D."/>
            <person name="Glavina T."/>
            <person name="Gomez M."/>
            <person name="Gonzales E."/>
            <person name="Goodstein D."/>
            <person name="Goodwin L.A."/>
            <person name="Grady D.L."/>
            <person name="Grigoriev I."/>
            <person name="Groza M."/>
            <person name="Hammon N."/>
            <person name="Hawkins T."/>
            <person name="Haydu L."/>
            <person name="Hildebrand C.E."/>
            <person name="Huang W."/>
            <person name="Israni S."/>
            <person name="Jett J."/>
            <person name="Jewett P.B."/>
            <person name="Kadner K."/>
            <person name="Kimball H."/>
            <person name="Kobayashi A."/>
            <person name="Krawczyk M.-C."/>
            <person name="Leyba T."/>
            <person name="Longmire J.L."/>
            <person name="Lopez F."/>
            <person name="Lou Y."/>
            <person name="Lowry S."/>
            <person name="Ludeman T."/>
            <person name="Manohar C.F."/>
            <person name="Mark G.A."/>
            <person name="McMurray K.L."/>
            <person name="Meincke L.J."/>
            <person name="Morgan J."/>
            <person name="Moyzis R.K."/>
            <person name="Mundt M.O."/>
            <person name="Munk A.C."/>
            <person name="Nandkeshwar R.D."/>
            <person name="Pitluck S."/>
            <person name="Pollard M."/>
            <person name="Predki P."/>
            <person name="Parson-Quintana B."/>
            <person name="Ramirez L."/>
            <person name="Rash S."/>
            <person name="Retterer J."/>
            <person name="Ricke D.O."/>
            <person name="Robinson D.L."/>
            <person name="Rodriguez A."/>
            <person name="Salamov A."/>
            <person name="Saunders E.H."/>
            <person name="Scott D."/>
            <person name="Shough T."/>
            <person name="Stallings R.L."/>
            <person name="Stalvey M."/>
            <person name="Sutherland R.D."/>
            <person name="Tapia R."/>
            <person name="Tesmer J.G."/>
            <person name="Thayer N."/>
            <person name="Thompson L.S."/>
            <person name="Tice H."/>
            <person name="Torney D.C."/>
            <person name="Tran-Gyamfi M."/>
            <person name="Tsai M."/>
            <person name="Ulanovsky L.E."/>
            <person name="Ustaszewska A."/>
            <person name="Vo N."/>
            <person name="White P.S."/>
            <person name="Williams A.L."/>
            <person name="Wills P.L."/>
            <person name="Wu J.-R."/>
            <person name="Wu K."/>
            <person name="Yang J."/>
            <person name="DeJong P."/>
            <person name="Bruce D."/>
            <person name="Doggett N.A."/>
            <person name="Deaven L."/>
            <person name="Schmutz J."/>
            <person name="Grimwood J."/>
            <person name="Richardson P."/>
            <person name="Rokhsar D.S."/>
            <person name="Eichler E.E."/>
            <person name="Gilna P."/>
            <person name="Lucas S.M."/>
            <person name="Myers R.M."/>
            <person name="Rubin E.M."/>
            <person name="Pennacchio L.A."/>
        </authorList>
    </citation>
    <scope>NUCLEOTIDE SEQUENCE [LARGE SCALE GENOMIC DNA]</scope>
</reference>
<reference key="4">
    <citation type="submission" date="2005-07" db="EMBL/GenBank/DDBJ databases">
        <authorList>
            <person name="Mural R.J."/>
            <person name="Istrail S."/>
            <person name="Sutton G."/>
            <person name="Florea L."/>
            <person name="Halpern A.L."/>
            <person name="Mobarry C.M."/>
            <person name="Lippert R."/>
            <person name="Walenz B."/>
            <person name="Shatkay H."/>
            <person name="Dew I."/>
            <person name="Miller J.R."/>
            <person name="Flanigan M.J."/>
            <person name="Edwards N.J."/>
            <person name="Bolanos R."/>
            <person name="Fasulo D."/>
            <person name="Halldorsson B.V."/>
            <person name="Hannenhalli S."/>
            <person name="Turner R."/>
            <person name="Yooseph S."/>
            <person name="Lu F."/>
            <person name="Nusskern D.R."/>
            <person name="Shue B.C."/>
            <person name="Zheng X.H."/>
            <person name="Zhong F."/>
            <person name="Delcher A.L."/>
            <person name="Huson D.H."/>
            <person name="Kravitz S.A."/>
            <person name="Mouchard L."/>
            <person name="Reinert K."/>
            <person name="Remington K.A."/>
            <person name="Clark A.G."/>
            <person name="Waterman M.S."/>
            <person name="Eichler E.E."/>
            <person name="Adams M.D."/>
            <person name="Hunkapiller M.W."/>
            <person name="Myers E.W."/>
            <person name="Venter J.C."/>
        </authorList>
    </citation>
    <scope>NUCLEOTIDE SEQUENCE [LARGE SCALE GENOMIC DNA]</scope>
</reference>
<reference key="5">
    <citation type="journal article" date="2004" name="Genome Res.">
        <title>The status, quality, and expansion of the NIH full-length cDNA project: the Mammalian Gene Collection (MGC).</title>
        <authorList>
            <consortium name="The MGC Project Team"/>
        </authorList>
    </citation>
    <scope>NUCLEOTIDE SEQUENCE [LARGE SCALE MRNA] (ISOFORM 1)</scope>
    <source>
        <tissue>Brain</tissue>
    </source>
</reference>
<reference key="6">
    <citation type="journal article" date="1999" name="Genomics">
        <title>Identification, mapping and phylogenomic analysis of four new human members of the T-box gene family: EOMES, TBX6, TBX18, and TBX19.</title>
        <authorList>
            <person name="Yi C.-H."/>
            <person name="Terrett J.A."/>
            <person name="Li Q.-Y."/>
            <person name="Ellington K."/>
            <person name="Packham E.A."/>
            <person name="Amstrong-Buisseret L."/>
            <person name="McClure P."/>
            <person name="Slingsby T."/>
            <person name="Brook J.D."/>
        </authorList>
    </citation>
    <scope>NUCLEOTIDE SEQUENCE [GENOMIC DNA] OF 135-272</scope>
    <source>
        <tissue>Myeloid</tissue>
    </source>
</reference>
<reference key="7">
    <citation type="journal article" date="2013" name="Hum. Mol. Genet.">
        <title>Autosomal dominant spondylocostal dysostosis is caused by mutation in TBX6.</title>
        <authorList>
            <person name="Sparrow D.B."/>
            <person name="McInerney-Leo A."/>
            <person name="Gucev Z.S."/>
            <person name="Gardiner B."/>
            <person name="Marshall M."/>
            <person name="Leo P.J."/>
            <person name="Chapman D.L."/>
            <person name="Tasic V."/>
            <person name="Shishko A."/>
            <person name="Brown M.A."/>
            <person name="Duncan E.L."/>
            <person name="Dunwoodie S.L."/>
        </authorList>
    </citation>
    <scope>INVOLVEMENT IN SCDO5</scope>
</reference>
<reference key="8">
    <citation type="journal article" date="2015" name="N. Engl. J. Med.">
        <title>TBX6 null variants and a common hypomorphic allele in congenital scoliosis.</title>
        <authorList>
            <person name="Wu N."/>
            <person name="Ming X."/>
            <person name="Xiao J."/>
            <person name="Wu Z."/>
            <person name="Chen X."/>
            <person name="Shinawi M."/>
            <person name="Shen Y."/>
            <person name="Yu G."/>
            <person name="Liu J."/>
            <person name="Xie H."/>
            <person name="Gucev Z.S."/>
            <person name="Liu S."/>
            <person name="Yang N."/>
            <person name="Al-Kateb H."/>
            <person name="Chen J."/>
            <person name="Zhang J."/>
            <person name="Hauser N."/>
            <person name="Zhang T."/>
            <person name="Tasic V."/>
            <person name="Liu P."/>
            <person name="Su X."/>
            <person name="Pan X."/>
            <person name="Liu C."/>
            <person name="Wang L."/>
            <person name="Shen J."/>
            <person name="Shen J."/>
            <person name="Chen Y."/>
            <person name="Zhang T."/>
            <person name="Zhang J."/>
            <person name="Choy K.W."/>
            <person name="Wang J."/>
            <person name="Wang Q."/>
            <person name="Li S."/>
            <person name="Zhou W."/>
            <person name="Guo J."/>
            <person name="Wang Y."/>
            <person name="Zhang C."/>
            <person name="Zhao H."/>
            <person name="An Y."/>
            <person name="Zhao Y."/>
            <person name="Wang J."/>
            <person name="Liu Z."/>
            <person name="Zuo Y."/>
            <person name="Tian Y."/>
            <person name="Weng X."/>
            <person name="Sutton V.R."/>
            <person name="Wang H."/>
            <person name="Ming Y."/>
            <person name="Kulkarni S."/>
            <person name="Zhong T.P."/>
            <person name="Giampietro P.F."/>
            <person name="Dunwoodie S.L."/>
            <person name="Cheung S.W."/>
            <person name="Zhang X."/>
            <person name="Jin L."/>
            <person name="Lupski J.R."/>
            <person name="Qiu G."/>
            <person name="Zhang F."/>
        </authorList>
    </citation>
    <scope>VARIANT SCDO5 LEU-145</scope>
</reference>
<reference key="9">
    <citation type="journal article" date="2017" name="Hum. Mutat.">
        <title>Compound heterozygosity for null mutations and a common hypomorphic risk haplotype in TBX6 causes congenital scoliosis.</title>
        <authorList>
            <consortium name="Japan Early Onset Scoliosis Research Group"/>
            <person name="Takeda K."/>
            <person name="Kou I."/>
            <person name="Kawakami N."/>
            <person name="Iida A."/>
            <person name="Nakajima M."/>
            <person name="Ogura Y."/>
            <person name="Imagawa E."/>
            <person name="Miyake N."/>
            <person name="Matsumoto N."/>
            <person name="Yasuhiko Y."/>
            <person name="Sudo H."/>
            <person name="Kotani T."/>
            <person name="Nakamura M."/>
            <person name="Matsumoto M."/>
            <person name="Watanabe K."/>
            <person name="Ikegawa S."/>
        </authorList>
    </citation>
    <scope>VARIANTS CONGENITAL SCOLIOSIS ILE-111 AND CYS-150</scope>
    <scope>CHARACTERIZATION OF VARIANTS CONGENITAL SCOLIOSIS ILE-111 AND CYS-150</scope>
</reference>
<feature type="chain" id="PRO_0000184438" description="T-box transcription factor TBX6">
    <location>
        <begin position="1"/>
        <end position="436"/>
    </location>
</feature>
<feature type="DNA-binding region" description="T-box" evidence="2">
    <location>
        <begin position="100"/>
        <end position="273"/>
    </location>
</feature>
<feature type="region of interest" description="Disordered" evidence="3">
    <location>
        <begin position="271"/>
        <end position="339"/>
    </location>
</feature>
<feature type="region of interest" description="Disordered" evidence="3">
    <location>
        <begin position="360"/>
        <end position="379"/>
    </location>
</feature>
<feature type="compositionally biased region" description="Basic and acidic residues" evidence="3">
    <location>
        <begin position="271"/>
        <end position="284"/>
    </location>
</feature>
<feature type="compositionally biased region" description="Low complexity" evidence="3">
    <location>
        <begin position="325"/>
        <end position="339"/>
    </location>
</feature>
<feature type="splice variant" id="VSP_054003" description="In isoform 2." evidence="7">
    <original>ERDARVKRKLRGPE</original>
    <variation>WELFIHLFMHSTNV</variation>
    <location>
        <begin position="281"/>
        <end position="294"/>
    </location>
</feature>
<feature type="splice variant" id="VSP_054004" description="In isoform 2." evidence="7">
    <location>
        <begin position="295"/>
        <end position="435"/>
    </location>
</feature>
<feature type="sequence variant" id="VAR_078494" description="In congenital scoliosis; uncertain significance; decreases transcriptional activity." evidence="6">
    <original>M</original>
    <variation>I</variation>
    <location>
        <position position="111"/>
    </location>
</feature>
<feature type="sequence variant" id="VAR_078495" description="In SCDO5; uncertain significance; dbSNP:rs202193096." evidence="5">
    <original>P</original>
    <variation>L</variation>
    <location>
        <position position="145"/>
    </location>
</feature>
<feature type="sequence variant" id="VAR_078496" description="In congenital scoliosis; uncertain significance; not change transcriptional activity; dbSNP:rs949681104." evidence="6">
    <original>R</original>
    <variation>C</variation>
    <location>
        <position position="150"/>
    </location>
</feature>
<feature type="sequence variant" id="VAR_061837" description="In dbSNP:rs56098093.">
    <original>G</original>
    <variation>S</variation>
    <location>
        <position position="162"/>
    </location>
</feature>
<feature type="sequence variant" id="VAR_027836" description="In dbSNP:rs12925839.">
    <original>S</original>
    <variation>F</variation>
    <location>
        <position position="178"/>
    </location>
</feature>
<feature type="sequence variant" id="VAR_027837" description="In dbSNP:rs12925838.">
    <original>P</original>
    <variation>S</variation>
    <location>
        <position position="179"/>
    </location>
</feature>
<feature type="sequence conflict" description="In Ref. 6; CAB37938." evidence="8" ref="6">
    <original>H</original>
    <variation>HV</variation>
    <location>
        <position position="207"/>
    </location>
</feature>
<feature type="sequence conflict" description="In Ref. 1; CAA07812." evidence="8" ref="1">
    <original>EL</original>
    <variation>DV</variation>
    <location>
        <begin position="388"/>
        <end position="389"/>
    </location>
</feature>
<accession>O95947</accession>
<accession>Q8TAS4</accession>
<accession>Q9HA44</accession>
<sequence length="436" mass="47045">MYHPRELYPSLGAGYRLGPAQPGADSSFPPALAEGYRYPELDTPKLDCFLSGMEAAPRTLAAHPPLPLLPPAMGTEPAPSAPEALHSLPGVSLSLENRELWKEFSSVGTEMIITKAGRRMFPACRVSVTGLDPEARYLFLLDVIPVDGARYRWQGRRWEPSGKAEPRLPDRVYIHPDSPATGAHWMRQPVSFHRVKLTNSTLDPHGHLILHSMHKYQPRIHLVRAAQLCSQHWGGMASFRFPETTFISVTAYQNPQITQLKIAANPFAKGFRENGRNCKRERDARVKRKLRGPEPAATEAYGSGDTPGGPCDSTLGGDIRESDPEQAPAPGEATAAPAPLCGGPSAEAYLLHPAAFHGAPSHLPTRSPSFPEAPDSGRSAPYSAAFLELPHGSGGSGYPAAPPAVPFAPHFLQGGPFPLPYTAPGGYLDVGSKPMY</sequence>
<gene>
    <name type="primary">TBX6</name>
</gene>
<comment type="function">
    <text evidence="1">T-box transcription factor that plays an essential role in the determination of the fate of axial stem cells: neural vs mesodermal. Acts in part by down-regulating, a specific enhancer (N1) of SOX2, to inhibit neural development. Seems to play also an essential role in left/right axis determination and acts through effects on Notch signaling around the node as well as through an effect on the morphology and motility of the nodal cilia (By similarity).</text>
</comment>
<comment type="subunit">
    <text>Forms a dimeric complex with DNA (in vitro).</text>
</comment>
<comment type="interaction">
    <interactant intactId="EBI-2824328">
        <id>O95947</id>
    </interactant>
    <interactant intactId="EBI-11976299">
        <id>Q5BKX5-3</id>
        <label>ACTMAP</label>
    </interactant>
    <organismsDiffer>false</organismsDiffer>
    <experiments>3</experiments>
</comment>
<comment type="interaction">
    <interactant intactId="EBI-2824328">
        <id>O95947</id>
    </interactant>
    <interactant intactId="EBI-12809220">
        <id>Q5SWW7</id>
        <label>C10orf55</label>
    </interactant>
    <organismsDiffer>false</organismsDiffer>
    <experiments>3</experiments>
</comment>
<comment type="interaction">
    <interactant intactId="EBI-2824328">
        <id>O95947</id>
    </interactant>
    <interactant intactId="EBI-946029">
        <id>Q6P1W5</id>
        <label>C1orf94</label>
    </interactant>
    <organismsDiffer>false</organismsDiffer>
    <experiments>4</experiments>
</comment>
<comment type="interaction">
    <interactant intactId="EBI-2824328">
        <id>O95947</id>
    </interactant>
    <interactant intactId="EBI-748171">
        <id>O43186</id>
        <label>CRX</label>
    </interactant>
    <organismsDiffer>false</organismsDiffer>
    <experiments>3</experiments>
</comment>
<comment type="interaction">
    <interactant intactId="EBI-2824328">
        <id>O95947</id>
    </interactant>
    <interactant intactId="EBI-3867333">
        <id>A8MQ03</id>
        <label>CYSRT1</label>
    </interactant>
    <organismsDiffer>false</organismsDiffer>
    <experiments>3</experiments>
</comment>
<comment type="interaction">
    <interactant intactId="EBI-2824328">
        <id>O95947</id>
    </interactant>
    <interactant intactId="EBI-724310">
        <id>Q15038</id>
        <label>DAZAP2</label>
    </interactant>
    <organismsDiffer>false</organismsDiffer>
    <experiments>3</experiments>
</comment>
<comment type="interaction">
    <interactant intactId="EBI-2824328">
        <id>O95947</id>
    </interactant>
    <interactant intactId="EBI-3957665">
        <id>Q96LI6</id>
        <label>HSFY2</label>
    </interactant>
    <organismsDiffer>false</organismsDiffer>
    <experiments>7</experiments>
</comment>
<comment type="interaction">
    <interactant intactId="EBI-2824328">
        <id>O95947</id>
    </interactant>
    <interactant intactId="EBI-748258">
        <id>Q5TA45</id>
        <label>INTS11</label>
    </interactant>
    <organismsDiffer>false</organismsDiffer>
    <experiments>3</experiments>
</comment>
<comment type="interaction">
    <interactant intactId="EBI-2824328">
        <id>O95947</id>
    </interactant>
    <interactant intactId="EBI-9478422">
        <id>Q96G42</id>
        <label>KLHDC7B</label>
    </interactant>
    <organismsDiffer>false</organismsDiffer>
    <experiments>3</experiments>
</comment>
<comment type="interaction">
    <interactant intactId="EBI-2824328">
        <id>O95947</id>
    </interactant>
    <interactant intactId="EBI-1052037">
        <id>Q8IUC1</id>
        <label>KRTAP11-1</label>
    </interactant>
    <organismsDiffer>false</organismsDiffer>
    <experiments>3</experiments>
</comment>
<comment type="interaction">
    <interactant intactId="EBI-2824328">
        <id>O95947</id>
    </interactant>
    <interactant intactId="EBI-11962084">
        <id>Q3LI66</id>
        <label>KRTAP6-2</label>
    </interactant>
    <organismsDiffer>false</organismsDiffer>
    <experiments>5</experiments>
</comment>
<comment type="interaction">
    <interactant intactId="EBI-2824328">
        <id>O95947</id>
    </interactant>
    <interactant intactId="EBI-22311199">
        <id>Q3LI67</id>
        <label>KRTAP6-3</label>
    </interactant>
    <organismsDiffer>false</organismsDiffer>
    <experiments>3</experiments>
</comment>
<comment type="interaction">
    <interactant intactId="EBI-2824328">
        <id>O95947</id>
    </interactant>
    <interactant intactId="EBI-21591415">
        <id>P13473-2</id>
        <label>LAMP2</label>
    </interactant>
    <organismsDiffer>false</organismsDiffer>
    <experiments>3</experiments>
</comment>
<comment type="interaction">
    <interactant intactId="EBI-2824328">
        <id>O95947</id>
    </interactant>
    <interactant intactId="EBI-716006">
        <id>Q9Y5V3</id>
        <label>MAGED1</label>
    </interactant>
    <organismsDiffer>false</organismsDiffer>
    <experiments>3</experiments>
</comment>
<comment type="interaction">
    <interactant intactId="EBI-2824328">
        <id>O95947</id>
    </interactant>
    <interactant intactId="EBI-8487781">
        <id>Q8N6F8</id>
        <label>METTL27</label>
    </interactant>
    <organismsDiffer>false</organismsDiffer>
    <experiments>3</experiments>
</comment>
<comment type="interaction">
    <interactant intactId="EBI-2824328">
        <id>O95947</id>
    </interactant>
    <interactant intactId="EBI-726466">
        <id>O15496</id>
        <label>PLA2G10</label>
    </interactant>
    <organismsDiffer>false</organismsDiffer>
    <experiments>3</experiments>
</comment>
<comment type="interaction">
    <interactant intactId="EBI-2824328">
        <id>O95947</id>
    </interactant>
    <interactant intactId="EBI-943588">
        <id>Q16633</id>
        <label>POU2AF1</label>
    </interactant>
    <organismsDiffer>false</organismsDiffer>
    <experiments>3</experiments>
</comment>
<comment type="interaction">
    <interactant intactId="EBI-2824328">
        <id>O95947</id>
    </interactant>
    <interactant intactId="EBI-12029004">
        <id>P78424</id>
        <label>POU6F2</label>
    </interactant>
    <organismsDiffer>false</organismsDiffer>
    <experiments>3</experiments>
</comment>
<comment type="interaction">
    <interactant intactId="EBI-2824328">
        <id>O95947</id>
    </interactant>
    <interactant intactId="EBI-12754095">
        <id>P86480</id>
        <label>PRR20D</label>
    </interactant>
    <organismsDiffer>false</organismsDiffer>
    <experiments>3</experiments>
</comment>
<comment type="interaction">
    <interactant intactId="EBI-2824328">
        <id>O95947</id>
    </interactant>
    <interactant intactId="EBI-740322">
        <id>Q93062</id>
        <label>RBPMS</label>
    </interactant>
    <organismsDiffer>false</organismsDiffer>
    <experiments>3</experiments>
</comment>
<comment type="interaction">
    <interactant intactId="EBI-2824328">
        <id>O95947</id>
    </interactant>
    <interactant intactId="EBI-740343">
        <id>Q93062-3</id>
        <label>RBPMS</label>
    </interactant>
    <organismsDiffer>false</organismsDiffer>
    <experiments>4</experiments>
</comment>
<comment type="interaction">
    <interactant intactId="EBI-2824328">
        <id>O95947</id>
    </interactant>
    <interactant intactId="EBI-10191361">
        <id>Q96SF7</id>
        <label>TBX15</label>
    </interactant>
    <organismsDiffer>false</organismsDiffer>
    <experiments>3</experiments>
</comment>
<comment type="interaction">
    <interactant intactId="EBI-2824328">
        <id>O95947</id>
    </interactant>
    <interactant intactId="EBI-12096770">
        <id>O60806</id>
        <label>TBX19</label>
    </interactant>
    <organismsDiffer>false</organismsDiffer>
    <experiments>3</experiments>
</comment>
<comment type="interaction">
    <interactant intactId="EBI-2824328">
        <id>O95947</id>
    </interactant>
    <interactant intactId="EBI-2555179">
        <id>Q9NUJ3</id>
        <label>TCP11L1</label>
    </interactant>
    <organismsDiffer>false</organismsDiffer>
    <experiments>3</experiments>
</comment>
<comment type="interaction">
    <interactant intactId="EBI-2824328">
        <id>O95947</id>
    </interactant>
    <interactant intactId="EBI-752030">
        <id>Q96A09</id>
        <label>TENT5B</label>
    </interactant>
    <organismsDiffer>false</organismsDiffer>
    <experiments>3</experiments>
</comment>
<comment type="interaction">
    <interactant intactId="EBI-2824328">
        <id>O95947</id>
    </interactant>
    <interactant intactId="EBI-11741437">
        <id>Q08117-2</id>
        <label>TLE5</label>
    </interactant>
    <organismsDiffer>false</organismsDiffer>
    <experiments>3</experiments>
</comment>
<comment type="interaction">
    <interactant intactId="EBI-2824328">
        <id>O95947</id>
    </interactant>
    <interactant intactId="EBI-948613">
        <id>O94842</id>
        <label>TOX4</label>
    </interactant>
    <organismsDiffer>false</organismsDiffer>
    <experiments>7</experiments>
</comment>
<comment type="interaction">
    <interactant intactId="EBI-2824328">
        <id>O95947</id>
    </interactant>
    <interactant intactId="EBI-12806590">
        <id>Q86WV8</id>
        <label>TSC1</label>
    </interactant>
    <organismsDiffer>false</organismsDiffer>
    <experiments>3</experiments>
</comment>
<comment type="interaction">
    <interactant intactId="EBI-2824328">
        <id>O95947</id>
    </interactant>
    <interactant intactId="EBI-741480">
        <id>Q9UMX0</id>
        <label>UBQLN1</label>
    </interactant>
    <organismsDiffer>false</organismsDiffer>
    <experiments>3</experiments>
</comment>
<comment type="interaction">
    <interactant intactId="EBI-2824328">
        <id>O95947</id>
    </interactant>
    <interactant intactId="EBI-1052596">
        <id>P31930</id>
        <label>UQCRC1</label>
    </interactant>
    <organismsDiffer>false</organismsDiffer>
    <experiments>3</experiments>
</comment>
<comment type="interaction">
    <interactant intactId="EBI-2824328">
        <id>O95947</id>
    </interactant>
    <interactant intactId="EBI-11975223">
        <id>Q70EL1-9</id>
        <label>USP54</label>
    </interactant>
    <organismsDiffer>false</organismsDiffer>
    <experiments>3</experiments>
</comment>
<comment type="subcellular location">
    <subcellularLocation>
        <location evidence="2">Nucleus</location>
    </subcellularLocation>
</comment>
<comment type="alternative products">
    <event type="alternative splicing"/>
    <isoform>
        <id>O95947-1</id>
        <name>1</name>
        <sequence type="displayed"/>
    </isoform>
    <isoform>
        <id>O95947-2</id>
        <name>2</name>
        <sequence type="described" ref="VSP_054003 VSP_054004"/>
    </isoform>
</comment>
<comment type="tissue specificity">
    <text>Expressed in fetal tail bud, posterior spinal tissue, intervertebral disk and testis. Also expressed in adult testis, kidney, lung, muscle and thymus.</text>
</comment>
<comment type="developmental stage">
    <text>Expressed during gastrulation and during a second phase in some adult tissues.</text>
</comment>
<comment type="disease" evidence="4 5">
    <disease id="DI-04021">
        <name>Spondylocostal dysostosis 5</name>
        <acronym>SCDO5</acronym>
        <description>A rare condition of variable severity characterized by vertebral and costal anomalies. The main feature include dwarfism, vertebral fusion, hemivertebrae, posterior rib fusion, reduced rib number, and other rib malformations. SCDO5 inheritance can be autosomal dominant or recessive.</description>
        <dbReference type="MIM" id="122600"/>
    </disease>
    <text>The disease is caused by variants affecting the gene represented in this entry.</text>
</comment>
<keyword id="KW-0025">Alternative splicing</keyword>
<keyword id="KW-0217">Developmental protein</keyword>
<keyword id="KW-0238">DNA-binding</keyword>
<keyword id="KW-0242">Dwarfism</keyword>
<keyword id="KW-0539">Nucleus</keyword>
<keyword id="KW-1185">Reference proteome</keyword>
<keyword id="KW-0804">Transcription</keyword>
<keyword id="KW-0805">Transcription regulation</keyword>
<dbReference type="EMBL" id="AJ007989">
    <property type="protein sequence ID" value="CAA07812.1"/>
    <property type="molecule type" value="mRNA"/>
</dbReference>
<dbReference type="EMBL" id="AK022330">
    <property type="protein sequence ID" value="BAB14014.1"/>
    <property type="molecule type" value="mRNA"/>
</dbReference>
<dbReference type="EMBL" id="AC012645">
    <property type="status" value="NOT_ANNOTATED_CDS"/>
    <property type="molecule type" value="Genomic_DNA"/>
</dbReference>
<dbReference type="EMBL" id="AC093512">
    <property type="status" value="NOT_ANNOTATED_CDS"/>
    <property type="molecule type" value="Genomic_DNA"/>
</dbReference>
<dbReference type="EMBL" id="CH471238">
    <property type="protein sequence ID" value="EAW79927.1"/>
    <property type="molecule type" value="Genomic_DNA"/>
</dbReference>
<dbReference type="EMBL" id="BC026031">
    <property type="protein sequence ID" value="AAH26031.1"/>
    <property type="molecule type" value="mRNA"/>
</dbReference>
<dbReference type="EMBL" id="AJ010279">
    <property type="protein sequence ID" value="CAB37938.1"/>
    <property type="molecule type" value="Genomic_DNA"/>
</dbReference>
<dbReference type="CCDS" id="CCDS10670.1">
    <molecule id="O95947-1"/>
</dbReference>
<dbReference type="RefSeq" id="NP_004599.2">
    <molecule id="O95947-1"/>
    <property type="nucleotide sequence ID" value="NM_004608.3"/>
</dbReference>
<dbReference type="RefSeq" id="XP_005255580.1">
    <property type="nucleotide sequence ID" value="XM_005255523.2"/>
</dbReference>
<dbReference type="RefSeq" id="XP_011544228.1">
    <molecule id="O95947-1"/>
    <property type="nucleotide sequence ID" value="XM_011545926.4"/>
</dbReference>
<dbReference type="RefSeq" id="XP_016879103.1">
    <property type="nucleotide sequence ID" value="XM_017023614.1"/>
</dbReference>
<dbReference type="RefSeq" id="XP_047290507.1">
    <molecule id="O95947-1"/>
    <property type="nucleotide sequence ID" value="XM_047434551.1"/>
</dbReference>
<dbReference type="RefSeq" id="XP_054169774.1">
    <molecule id="O95947-1"/>
    <property type="nucleotide sequence ID" value="XM_054313799.1"/>
</dbReference>
<dbReference type="RefSeq" id="XP_054169775.1">
    <molecule id="O95947-1"/>
    <property type="nucleotide sequence ID" value="XM_054313800.1"/>
</dbReference>
<dbReference type="RefSeq" id="XP_054169776.1">
    <molecule id="O95947-1"/>
    <property type="nucleotide sequence ID" value="XM_054313801.1"/>
</dbReference>
<dbReference type="RefSeq" id="XP_054169777.1">
    <molecule id="O95947-1"/>
    <property type="nucleotide sequence ID" value="XM_054313802.1"/>
</dbReference>
<dbReference type="SMR" id="O95947"/>
<dbReference type="BioGRID" id="112774">
    <property type="interactions" value="39"/>
</dbReference>
<dbReference type="FunCoup" id="O95947">
    <property type="interactions" value="159"/>
</dbReference>
<dbReference type="IntAct" id="O95947">
    <property type="interactions" value="32"/>
</dbReference>
<dbReference type="MINT" id="O95947"/>
<dbReference type="STRING" id="9606.ENSP00000378650"/>
<dbReference type="GlyGen" id="O95947">
    <property type="glycosylation" value="2 sites, 1 O-linked glycan (1 site)"/>
</dbReference>
<dbReference type="PhosphoSitePlus" id="O95947"/>
<dbReference type="BioMuta" id="TBX6"/>
<dbReference type="MassIVE" id="O95947"/>
<dbReference type="PaxDb" id="9606-ENSP00000378650"/>
<dbReference type="PeptideAtlas" id="O95947"/>
<dbReference type="ProteomicsDB" id="51140">
    <molecule id="O95947-1"/>
</dbReference>
<dbReference type="ProteomicsDB" id="81374"/>
<dbReference type="Antibodypedia" id="13514">
    <property type="antibodies" value="390 antibodies from 31 providers"/>
</dbReference>
<dbReference type="DNASU" id="6911"/>
<dbReference type="Ensembl" id="ENST00000279386.6">
    <molecule id="O95947-1"/>
    <property type="protein sequence ID" value="ENSP00000279386.2"/>
    <property type="gene ID" value="ENSG00000149922.12"/>
</dbReference>
<dbReference type="Ensembl" id="ENST00000395224.7">
    <molecule id="O95947-1"/>
    <property type="protein sequence ID" value="ENSP00000378650.2"/>
    <property type="gene ID" value="ENSG00000149922.12"/>
</dbReference>
<dbReference type="Ensembl" id="ENST00000553607.1">
    <molecule id="O95947-2"/>
    <property type="protein sequence ID" value="ENSP00000461223.1"/>
    <property type="gene ID" value="ENSG00000149922.12"/>
</dbReference>
<dbReference type="Ensembl" id="ENST00000567664.5">
    <molecule id="O95947-2"/>
    <property type="protein sequence ID" value="ENSP00000460425.1"/>
    <property type="gene ID" value="ENSG00000149922.12"/>
</dbReference>
<dbReference type="GeneID" id="6911"/>
<dbReference type="KEGG" id="hsa:6911"/>
<dbReference type="MANE-Select" id="ENST00000395224.7">
    <property type="protein sequence ID" value="ENSP00000378650.2"/>
    <property type="RefSeq nucleotide sequence ID" value="NM_004608.4"/>
    <property type="RefSeq protein sequence ID" value="NP_004599.2"/>
</dbReference>
<dbReference type="UCSC" id="uc002dwk.1">
    <molecule id="O95947-1"/>
    <property type="organism name" value="human"/>
</dbReference>
<dbReference type="AGR" id="HGNC:11605"/>
<dbReference type="CTD" id="6911"/>
<dbReference type="DisGeNET" id="6911"/>
<dbReference type="GeneCards" id="TBX6"/>
<dbReference type="GeneReviews" id="TBX6"/>
<dbReference type="HGNC" id="HGNC:11605">
    <property type="gene designation" value="TBX6"/>
</dbReference>
<dbReference type="HPA" id="ENSG00000149922">
    <property type="expression patterns" value="Tissue enhanced (esophagus)"/>
</dbReference>
<dbReference type="MalaCards" id="TBX6"/>
<dbReference type="MIM" id="122600">
    <property type="type" value="phenotype"/>
</dbReference>
<dbReference type="MIM" id="602427">
    <property type="type" value="gene"/>
</dbReference>
<dbReference type="neXtProt" id="NX_O95947"/>
<dbReference type="OpenTargets" id="ENSG00000149922"/>
<dbReference type="Orphanet" id="1797">
    <property type="disease" value="Autosomal dominant spondylocostal dysostosis"/>
</dbReference>
<dbReference type="Orphanet" id="2311">
    <property type="disease" value="Autosomal recessive spondylocostal dysostosis"/>
</dbReference>
<dbReference type="PharmGKB" id="PA36368"/>
<dbReference type="VEuPathDB" id="HostDB:ENSG00000149922"/>
<dbReference type="eggNOG" id="KOG3585">
    <property type="taxonomic scope" value="Eukaryota"/>
</dbReference>
<dbReference type="GeneTree" id="ENSGT00940000160732"/>
<dbReference type="HOGENOM" id="CLU_052181_0_0_1"/>
<dbReference type="InParanoid" id="O95947"/>
<dbReference type="OMA" id="CSRHWGG"/>
<dbReference type="OrthoDB" id="7442607at2759"/>
<dbReference type="PAN-GO" id="O95947">
    <property type="GO annotations" value="8 GO annotations based on evolutionary models"/>
</dbReference>
<dbReference type="PhylomeDB" id="O95947"/>
<dbReference type="TreeFam" id="TF106341"/>
<dbReference type="PathwayCommons" id="O95947"/>
<dbReference type="Reactome" id="R-HSA-9793380">
    <property type="pathway name" value="Formation of paraxial mesoderm"/>
</dbReference>
<dbReference type="Reactome" id="R-HSA-9824272">
    <property type="pathway name" value="Somitogenesis"/>
</dbReference>
<dbReference type="Reactome" id="R-HSA-9832991">
    <property type="pathway name" value="Formation of the posterior neural plate"/>
</dbReference>
<dbReference type="SignaLink" id="O95947"/>
<dbReference type="SIGNOR" id="O95947"/>
<dbReference type="BioGRID-ORCS" id="6911">
    <property type="hits" value="13 hits in 1176 CRISPR screens"/>
</dbReference>
<dbReference type="GenomeRNAi" id="6911"/>
<dbReference type="Pharos" id="O95947">
    <property type="development level" value="Tbio"/>
</dbReference>
<dbReference type="PRO" id="PR:O95947"/>
<dbReference type="Proteomes" id="UP000005640">
    <property type="component" value="Chromosome 16"/>
</dbReference>
<dbReference type="RNAct" id="O95947">
    <property type="molecule type" value="protein"/>
</dbReference>
<dbReference type="Bgee" id="ENSG00000149922">
    <property type="expression patterns" value="Expressed in lower esophagus mucosa and 115 other cell types or tissues"/>
</dbReference>
<dbReference type="ExpressionAtlas" id="O95947">
    <property type="expression patterns" value="baseline and differential"/>
</dbReference>
<dbReference type="GO" id="GO:0000785">
    <property type="term" value="C:chromatin"/>
    <property type="evidence" value="ECO:0000247"/>
    <property type="project" value="NTNU_SB"/>
</dbReference>
<dbReference type="GO" id="GO:0005634">
    <property type="term" value="C:nucleus"/>
    <property type="evidence" value="ECO:0000318"/>
    <property type="project" value="GO_Central"/>
</dbReference>
<dbReference type="GO" id="GO:0003677">
    <property type="term" value="F:DNA binding"/>
    <property type="evidence" value="ECO:0000304"/>
    <property type="project" value="ProtInc"/>
</dbReference>
<dbReference type="GO" id="GO:0000981">
    <property type="term" value="F:DNA-binding transcription factor activity, RNA polymerase II-specific"/>
    <property type="evidence" value="ECO:0000247"/>
    <property type="project" value="NTNU_SB"/>
</dbReference>
<dbReference type="GO" id="GO:0000978">
    <property type="term" value="F:RNA polymerase II cis-regulatory region sequence-specific DNA binding"/>
    <property type="evidence" value="ECO:0000318"/>
    <property type="project" value="GO_Central"/>
</dbReference>
<dbReference type="GO" id="GO:0061629">
    <property type="term" value="F:RNA polymerase II-specific DNA-binding transcription factor binding"/>
    <property type="evidence" value="ECO:0000250"/>
    <property type="project" value="BHF-UCL"/>
</dbReference>
<dbReference type="GO" id="GO:1990837">
    <property type="term" value="F:sequence-specific double-stranded DNA binding"/>
    <property type="evidence" value="ECO:0000314"/>
    <property type="project" value="ARUK-UCL"/>
</dbReference>
<dbReference type="GO" id="GO:0003714">
    <property type="term" value="F:transcription corepressor activity"/>
    <property type="evidence" value="ECO:0000250"/>
    <property type="project" value="BHF-UCL"/>
</dbReference>
<dbReference type="GO" id="GO:0009653">
    <property type="term" value="P:anatomical structure morphogenesis"/>
    <property type="evidence" value="ECO:0000304"/>
    <property type="project" value="ProtInc"/>
</dbReference>
<dbReference type="GO" id="GO:0001708">
    <property type="term" value="P:cell fate specification"/>
    <property type="evidence" value="ECO:0000318"/>
    <property type="project" value="GO_Central"/>
</dbReference>
<dbReference type="GO" id="GO:0007498">
    <property type="term" value="P:mesoderm development"/>
    <property type="evidence" value="ECO:0000304"/>
    <property type="project" value="ProtInc"/>
</dbReference>
<dbReference type="GO" id="GO:0007501">
    <property type="term" value="P:mesodermal cell fate specification"/>
    <property type="evidence" value="ECO:0007669"/>
    <property type="project" value="Ensembl"/>
</dbReference>
<dbReference type="GO" id="GO:0014043">
    <property type="term" value="P:negative regulation of neuron maturation"/>
    <property type="evidence" value="ECO:0007669"/>
    <property type="project" value="Ensembl"/>
</dbReference>
<dbReference type="GO" id="GO:0010977">
    <property type="term" value="P:negative regulation of neuron projection development"/>
    <property type="evidence" value="ECO:0007669"/>
    <property type="project" value="Ensembl"/>
</dbReference>
<dbReference type="GO" id="GO:0000122">
    <property type="term" value="P:negative regulation of transcription by RNA polymerase II"/>
    <property type="evidence" value="ECO:0000250"/>
    <property type="project" value="BHF-UCL"/>
</dbReference>
<dbReference type="GO" id="GO:0045944">
    <property type="term" value="P:positive regulation of transcription by RNA polymerase II"/>
    <property type="evidence" value="ECO:0007669"/>
    <property type="project" value="Ensembl"/>
</dbReference>
<dbReference type="GO" id="GO:0006357">
    <property type="term" value="P:regulation of transcription by RNA polymerase II"/>
    <property type="evidence" value="ECO:0000318"/>
    <property type="project" value="GO_Central"/>
</dbReference>
<dbReference type="GO" id="GO:0023019">
    <property type="term" value="P:signal transduction involved in regulation of gene expression"/>
    <property type="evidence" value="ECO:0007669"/>
    <property type="project" value="Ensembl"/>
</dbReference>
<dbReference type="GO" id="GO:0032525">
    <property type="term" value="P:somite rostral/caudal axis specification"/>
    <property type="evidence" value="ECO:0007669"/>
    <property type="project" value="Ensembl"/>
</dbReference>
<dbReference type="CDD" id="cd20190">
    <property type="entry name" value="T-box_TBX6_VegT-like"/>
    <property type="match status" value="1"/>
</dbReference>
<dbReference type="FunFam" id="2.60.40.820:FF:000007">
    <property type="entry name" value="T-box transcription factor"/>
    <property type="match status" value="1"/>
</dbReference>
<dbReference type="Gene3D" id="2.60.40.820">
    <property type="entry name" value="Transcription factor, T-box"/>
    <property type="match status" value="1"/>
</dbReference>
<dbReference type="InterPro" id="IPR008967">
    <property type="entry name" value="p53-like_TF_DNA-bd_sf"/>
</dbReference>
<dbReference type="InterPro" id="IPR046360">
    <property type="entry name" value="T-box_DNA-bd"/>
</dbReference>
<dbReference type="InterPro" id="IPR036960">
    <property type="entry name" value="T-box_sf"/>
</dbReference>
<dbReference type="InterPro" id="IPR002070">
    <property type="entry name" value="TF_Brachyury"/>
</dbReference>
<dbReference type="InterPro" id="IPR001699">
    <property type="entry name" value="TF_T-box"/>
</dbReference>
<dbReference type="InterPro" id="IPR018186">
    <property type="entry name" value="TF_T-box_CS"/>
</dbReference>
<dbReference type="PANTHER" id="PTHR11267">
    <property type="entry name" value="T-BOX PROTEIN-RELATED"/>
    <property type="match status" value="1"/>
</dbReference>
<dbReference type="PANTHER" id="PTHR11267:SF100">
    <property type="entry name" value="T-BOX TRANSCRIPTION FACTOR TBX6"/>
    <property type="match status" value="1"/>
</dbReference>
<dbReference type="Pfam" id="PF00907">
    <property type="entry name" value="T-box"/>
    <property type="match status" value="1"/>
</dbReference>
<dbReference type="PRINTS" id="PR00938">
    <property type="entry name" value="BRACHYURY"/>
</dbReference>
<dbReference type="PRINTS" id="PR00937">
    <property type="entry name" value="TBOX"/>
</dbReference>
<dbReference type="SMART" id="SM00425">
    <property type="entry name" value="TBOX"/>
    <property type="match status" value="1"/>
</dbReference>
<dbReference type="SUPFAM" id="SSF49417">
    <property type="entry name" value="p53-like transcription factors"/>
    <property type="match status" value="1"/>
</dbReference>
<dbReference type="PROSITE" id="PS01283">
    <property type="entry name" value="TBOX_1"/>
    <property type="match status" value="1"/>
</dbReference>
<dbReference type="PROSITE" id="PS01264">
    <property type="entry name" value="TBOX_2"/>
    <property type="match status" value="1"/>
</dbReference>
<dbReference type="PROSITE" id="PS50252">
    <property type="entry name" value="TBOX_3"/>
    <property type="match status" value="1"/>
</dbReference>
<evidence type="ECO:0000250" key="1"/>
<evidence type="ECO:0000255" key="2">
    <source>
        <dbReference type="PROSITE-ProRule" id="PRU00201"/>
    </source>
</evidence>
<evidence type="ECO:0000256" key="3">
    <source>
        <dbReference type="SAM" id="MobiDB-lite"/>
    </source>
</evidence>
<evidence type="ECO:0000269" key="4">
    <source>
    </source>
</evidence>
<evidence type="ECO:0000269" key="5">
    <source>
    </source>
</evidence>
<evidence type="ECO:0000269" key="6">
    <source>
    </source>
</evidence>
<evidence type="ECO:0000303" key="7">
    <source>
    </source>
</evidence>
<evidence type="ECO:0000305" key="8"/>
<organism>
    <name type="scientific">Homo sapiens</name>
    <name type="common">Human</name>
    <dbReference type="NCBI Taxonomy" id="9606"/>
    <lineage>
        <taxon>Eukaryota</taxon>
        <taxon>Metazoa</taxon>
        <taxon>Chordata</taxon>
        <taxon>Craniata</taxon>
        <taxon>Vertebrata</taxon>
        <taxon>Euteleostomi</taxon>
        <taxon>Mammalia</taxon>
        <taxon>Eutheria</taxon>
        <taxon>Euarchontoglires</taxon>
        <taxon>Primates</taxon>
        <taxon>Haplorrhini</taxon>
        <taxon>Catarrhini</taxon>
        <taxon>Hominidae</taxon>
        <taxon>Homo</taxon>
    </lineage>
</organism>
<protein>
    <recommendedName>
        <fullName>T-box transcription factor TBX6</fullName>
        <shortName>T-box protein 6</shortName>
    </recommendedName>
</protein>
<name>TBX6_HUMAN</name>